<dbReference type="EMBL" id="CR858644">
    <property type="protein sequence ID" value="CAH90860.1"/>
    <property type="molecule type" value="mRNA"/>
</dbReference>
<dbReference type="RefSeq" id="NP_001128977.1">
    <property type="nucleotide sequence ID" value="NM_001135505.1"/>
</dbReference>
<dbReference type="SMR" id="Q5RBK0"/>
<dbReference type="FunCoup" id="Q5RBK0">
    <property type="interactions" value="1023"/>
</dbReference>
<dbReference type="STRING" id="9601.ENSPPYP00000017517"/>
<dbReference type="GeneID" id="100190817"/>
<dbReference type="KEGG" id="pon:100190817"/>
<dbReference type="CTD" id="54826"/>
<dbReference type="eggNOG" id="KOG0017">
    <property type="taxonomic scope" value="Eukaryota"/>
</dbReference>
<dbReference type="InParanoid" id="Q5RBK0"/>
<dbReference type="OrthoDB" id="413122at2759"/>
<dbReference type="Proteomes" id="UP000001595">
    <property type="component" value="Unplaced"/>
</dbReference>
<dbReference type="GO" id="GO:0003676">
    <property type="term" value="F:nucleic acid binding"/>
    <property type="evidence" value="ECO:0007669"/>
    <property type="project" value="InterPro"/>
</dbReference>
<dbReference type="GO" id="GO:0015074">
    <property type="term" value="P:DNA integration"/>
    <property type="evidence" value="ECO:0007669"/>
    <property type="project" value="InterPro"/>
</dbReference>
<dbReference type="FunFam" id="1.10.340.70:FF:000001">
    <property type="entry name" value="Retrovirus-related Pol polyprotein from transposon gypsy-like Protein"/>
    <property type="match status" value="1"/>
</dbReference>
<dbReference type="Gene3D" id="1.10.340.70">
    <property type="match status" value="1"/>
</dbReference>
<dbReference type="Gene3D" id="3.30.420.10">
    <property type="entry name" value="Ribonuclease H-like superfamily/Ribonuclease H"/>
    <property type="match status" value="1"/>
</dbReference>
<dbReference type="InterPro" id="IPR001584">
    <property type="entry name" value="Integrase_cat-core"/>
</dbReference>
<dbReference type="InterPro" id="IPR041588">
    <property type="entry name" value="Integrase_H2C2"/>
</dbReference>
<dbReference type="InterPro" id="IPR050951">
    <property type="entry name" value="Retrovirus_Pol_polyprotein"/>
</dbReference>
<dbReference type="InterPro" id="IPR012337">
    <property type="entry name" value="RNaseH-like_sf"/>
</dbReference>
<dbReference type="InterPro" id="IPR036397">
    <property type="entry name" value="RNaseH_sf"/>
</dbReference>
<dbReference type="PANTHER" id="PTHR37984">
    <property type="entry name" value="PROTEIN CBG26694"/>
    <property type="match status" value="1"/>
</dbReference>
<dbReference type="PANTHER" id="PTHR37984:SF5">
    <property type="entry name" value="PROTEIN NYNRIN-LIKE"/>
    <property type="match status" value="1"/>
</dbReference>
<dbReference type="Pfam" id="PF17921">
    <property type="entry name" value="Integrase_H2C2"/>
    <property type="match status" value="1"/>
</dbReference>
<dbReference type="SUPFAM" id="SSF53098">
    <property type="entry name" value="Ribonuclease H-like"/>
    <property type="match status" value="1"/>
</dbReference>
<dbReference type="PROSITE" id="PS50994">
    <property type="entry name" value="INTEGRASE"/>
    <property type="match status" value="1"/>
</dbReference>
<proteinExistence type="evidence at transcript level"/>
<protein>
    <recommendedName>
        <fullName>Gypsy retrotransposon integrase-like protein 1</fullName>
        <shortName>GIN-1</shortName>
    </recommendedName>
</protein>
<name>GIN1_PONAB</name>
<feature type="chain" id="PRO_0000333019" description="Gypsy retrotransposon integrase-like protein 1">
    <location>
        <begin position="1"/>
        <end position="522"/>
    </location>
</feature>
<feature type="domain" description="Integrase catalytic" evidence="2">
    <location>
        <begin position="135"/>
        <end position="292"/>
    </location>
</feature>
<feature type="modified residue" description="Phosphoserine" evidence="1">
    <location>
        <position position="502"/>
    </location>
</feature>
<reference key="1">
    <citation type="submission" date="2004-11" db="EMBL/GenBank/DDBJ databases">
        <authorList>
            <consortium name="The German cDNA consortium"/>
        </authorList>
    </citation>
    <scope>NUCLEOTIDE SEQUENCE [LARGE SCALE MRNA]</scope>
    <source>
        <tissue>Kidney</tissue>
    </source>
</reference>
<accession>Q5RBK0</accession>
<gene>
    <name type="primary">GIN1</name>
</gene>
<keyword id="KW-0597">Phosphoprotein</keyword>
<keyword id="KW-1185">Reference proteome</keyword>
<organism>
    <name type="scientific">Pongo abelii</name>
    <name type="common">Sumatran orangutan</name>
    <name type="synonym">Pongo pygmaeus abelii</name>
    <dbReference type="NCBI Taxonomy" id="9601"/>
    <lineage>
        <taxon>Eukaryota</taxon>
        <taxon>Metazoa</taxon>
        <taxon>Chordata</taxon>
        <taxon>Craniata</taxon>
        <taxon>Vertebrata</taxon>
        <taxon>Euteleostomi</taxon>
        <taxon>Mammalia</taxon>
        <taxon>Eutheria</taxon>
        <taxon>Euarchontoglires</taxon>
        <taxon>Primates</taxon>
        <taxon>Haplorrhini</taxon>
        <taxon>Catarrhini</taxon>
        <taxon>Hominidae</taxon>
        <taxon>Pongo</taxon>
    </lineage>
</organism>
<evidence type="ECO:0000250" key="1">
    <source>
        <dbReference type="UniProtKB" id="Q9NXP7"/>
    </source>
</evidence>
<evidence type="ECO:0000255" key="2">
    <source>
        <dbReference type="PROSITE-ProRule" id="PRU00457"/>
    </source>
</evidence>
<sequence>MVRSGKNGDLHLKQIAYYKRTGEYHPTTLPSERRGIRRAAKKFVFKEKKLFYVGKDRKQNRLVIVSEEEKKKVLRECHENDSGAHHGISRTLTLVESNYYWTSVTNDVKQWVYACQHCQVAKNTVIVAPKQHLLKVENPWSLVTVDLMGPFHTSNRSHVYAVIMTDLFTKWIVILPLCDVSASEVSKAIINIFFLYGPPQKIIMDQRDEFIQQINIELYRLFGIKQIVISHTSGSVNPTESTPNTIKAFLSKHCADHPNNWDDHLSAVSFAFNVTHLEPTKNTPYFQMFSRNPYMPETSDSLHEVDGDNTSMFAKILDAIKEADKIMENKTTSLGQMENNNLDELNKSKIIVKKKPKQLNPFHLKVGHEVLRQRKNWWKDGRFQSEWVGPCVIDYITESGCAVLRDNTGVRLKRPIKMSHLKPYIRESSEQESLYLLQGSVVADHDYIGLPEIPVGAYQANILVEDATIGIVDNELLTSSKDRELLEYRNTKVSPLIDDHSSLEKQTFSLLDSSNQVLEYLS</sequence>